<evidence type="ECO:0000255" key="1">
    <source>
        <dbReference type="HAMAP-Rule" id="MF_00197"/>
    </source>
</evidence>
<dbReference type="EC" id="5.1.1.7" evidence="1"/>
<dbReference type="EMBL" id="CT573326">
    <property type="protein sequence ID" value="CAK17983.1"/>
    <property type="molecule type" value="Genomic_DNA"/>
</dbReference>
<dbReference type="RefSeq" id="WP_011536341.1">
    <property type="nucleotide sequence ID" value="NC_008027.1"/>
</dbReference>
<dbReference type="SMR" id="Q1I303"/>
<dbReference type="STRING" id="384676.PSEEN5366"/>
<dbReference type="GeneID" id="32808277"/>
<dbReference type="KEGG" id="pen:PSEEN5366"/>
<dbReference type="eggNOG" id="COG0253">
    <property type="taxonomic scope" value="Bacteria"/>
</dbReference>
<dbReference type="HOGENOM" id="CLU_053306_1_1_6"/>
<dbReference type="OrthoDB" id="9805408at2"/>
<dbReference type="UniPathway" id="UPA00034">
    <property type="reaction ID" value="UER00025"/>
</dbReference>
<dbReference type="Proteomes" id="UP000000658">
    <property type="component" value="Chromosome"/>
</dbReference>
<dbReference type="GO" id="GO:0005829">
    <property type="term" value="C:cytosol"/>
    <property type="evidence" value="ECO:0007669"/>
    <property type="project" value="TreeGrafter"/>
</dbReference>
<dbReference type="GO" id="GO:0008837">
    <property type="term" value="F:diaminopimelate epimerase activity"/>
    <property type="evidence" value="ECO:0007669"/>
    <property type="project" value="UniProtKB-UniRule"/>
</dbReference>
<dbReference type="GO" id="GO:0009089">
    <property type="term" value="P:lysine biosynthetic process via diaminopimelate"/>
    <property type="evidence" value="ECO:0007669"/>
    <property type="project" value="UniProtKB-UniRule"/>
</dbReference>
<dbReference type="FunFam" id="3.10.310.10:FF:000001">
    <property type="entry name" value="Diaminopimelate epimerase"/>
    <property type="match status" value="1"/>
</dbReference>
<dbReference type="FunFam" id="3.10.310.10:FF:000004">
    <property type="entry name" value="Diaminopimelate epimerase"/>
    <property type="match status" value="1"/>
</dbReference>
<dbReference type="Gene3D" id="3.10.310.10">
    <property type="entry name" value="Diaminopimelate Epimerase, Chain A, domain 1"/>
    <property type="match status" value="2"/>
</dbReference>
<dbReference type="HAMAP" id="MF_00197">
    <property type="entry name" value="DAP_epimerase"/>
    <property type="match status" value="1"/>
</dbReference>
<dbReference type="InterPro" id="IPR018510">
    <property type="entry name" value="DAP_epimerase_AS"/>
</dbReference>
<dbReference type="InterPro" id="IPR001653">
    <property type="entry name" value="DAP_epimerase_DapF"/>
</dbReference>
<dbReference type="NCBIfam" id="TIGR00652">
    <property type="entry name" value="DapF"/>
    <property type="match status" value="1"/>
</dbReference>
<dbReference type="PANTHER" id="PTHR31689:SF0">
    <property type="entry name" value="DIAMINOPIMELATE EPIMERASE"/>
    <property type="match status" value="1"/>
</dbReference>
<dbReference type="PANTHER" id="PTHR31689">
    <property type="entry name" value="DIAMINOPIMELATE EPIMERASE, CHLOROPLASTIC"/>
    <property type="match status" value="1"/>
</dbReference>
<dbReference type="Pfam" id="PF01678">
    <property type="entry name" value="DAP_epimerase"/>
    <property type="match status" value="2"/>
</dbReference>
<dbReference type="SUPFAM" id="SSF54506">
    <property type="entry name" value="Diaminopimelate epimerase-like"/>
    <property type="match status" value="1"/>
</dbReference>
<dbReference type="PROSITE" id="PS01326">
    <property type="entry name" value="DAP_EPIMERASE"/>
    <property type="match status" value="1"/>
</dbReference>
<comment type="function">
    <text evidence="1">Catalyzes the stereoinversion of LL-2,6-diaminopimelate (L,L-DAP) to meso-diaminopimelate (meso-DAP), a precursor of L-lysine and an essential component of the bacterial peptidoglycan.</text>
</comment>
<comment type="catalytic activity">
    <reaction evidence="1">
        <text>(2S,6S)-2,6-diaminopimelate = meso-2,6-diaminopimelate</text>
        <dbReference type="Rhea" id="RHEA:15393"/>
        <dbReference type="ChEBI" id="CHEBI:57609"/>
        <dbReference type="ChEBI" id="CHEBI:57791"/>
        <dbReference type="EC" id="5.1.1.7"/>
    </reaction>
</comment>
<comment type="pathway">
    <text evidence="1">Amino-acid biosynthesis; L-lysine biosynthesis via DAP pathway; DL-2,6-diaminopimelate from LL-2,6-diaminopimelate: step 1/1.</text>
</comment>
<comment type="subunit">
    <text evidence="1">Homodimer.</text>
</comment>
<comment type="subcellular location">
    <subcellularLocation>
        <location evidence="1">Cytoplasm</location>
    </subcellularLocation>
</comment>
<comment type="similarity">
    <text evidence="1">Belongs to the diaminopimelate epimerase family.</text>
</comment>
<keyword id="KW-0028">Amino-acid biosynthesis</keyword>
<keyword id="KW-0963">Cytoplasm</keyword>
<keyword id="KW-0413">Isomerase</keyword>
<keyword id="KW-0457">Lysine biosynthesis</keyword>
<organism>
    <name type="scientific">Pseudomonas entomophila (strain L48)</name>
    <dbReference type="NCBI Taxonomy" id="384676"/>
    <lineage>
        <taxon>Bacteria</taxon>
        <taxon>Pseudomonadati</taxon>
        <taxon>Pseudomonadota</taxon>
        <taxon>Gammaproteobacteria</taxon>
        <taxon>Pseudomonadales</taxon>
        <taxon>Pseudomonadaceae</taxon>
        <taxon>Pseudomonas</taxon>
    </lineage>
</organism>
<feature type="chain" id="PRO_1000011932" description="Diaminopimelate epimerase">
    <location>
        <begin position="1"/>
        <end position="276"/>
    </location>
</feature>
<feature type="active site" description="Proton donor" evidence="1">
    <location>
        <position position="75"/>
    </location>
</feature>
<feature type="active site" description="Proton acceptor" evidence="1">
    <location>
        <position position="219"/>
    </location>
</feature>
<feature type="binding site" evidence="1">
    <location>
        <position position="13"/>
    </location>
    <ligand>
        <name>substrate</name>
    </ligand>
</feature>
<feature type="binding site" evidence="1">
    <location>
        <position position="46"/>
    </location>
    <ligand>
        <name>substrate</name>
    </ligand>
</feature>
<feature type="binding site" evidence="1">
    <location>
        <position position="66"/>
    </location>
    <ligand>
        <name>substrate</name>
    </ligand>
</feature>
<feature type="binding site" evidence="1">
    <location>
        <begin position="76"/>
        <end position="77"/>
    </location>
    <ligand>
        <name>substrate</name>
    </ligand>
</feature>
<feature type="binding site" evidence="1">
    <location>
        <position position="159"/>
    </location>
    <ligand>
        <name>substrate</name>
    </ligand>
</feature>
<feature type="binding site" evidence="1">
    <location>
        <position position="192"/>
    </location>
    <ligand>
        <name>substrate</name>
    </ligand>
</feature>
<feature type="binding site" evidence="1">
    <location>
        <begin position="210"/>
        <end position="211"/>
    </location>
    <ligand>
        <name>substrate</name>
    </ligand>
</feature>
<feature type="binding site" evidence="1">
    <location>
        <begin position="220"/>
        <end position="221"/>
    </location>
    <ligand>
        <name>substrate</name>
    </ligand>
</feature>
<feature type="site" description="Could be important to modulate the pK values of the two catalytic cysteine residues" evidence="1">
    <location>
        <position position="161"/>
    </location>
</feature>
<feature type="site" description="Could be important to modulate the pK values of the two catalytic cysteine residues" evidence="1">
    <location>
        <position position="210"/>
    </location>
</feature>
<feature type="site" description="Important for dimerization" evidence="1">
    <location>
        <position position="270"/>
    </location>
</feature>
<reference key="1">
    <citation type="journal article" date="2006" name="Nat. Biotechnol.">
        <title>Complete genome sequence of the entomopathogenic and metabolically versatile soil bacterium Pseudomonas entomophila.</title>
        <authorList>
            <person name="Vodovar N."/>
            <person name="Vallenet D."/>
            <person name="Cruveiller S."/>
            <person name="Rouy Z."/>
            <person name="Barbe V."/>
            <person name="Acosta C."/>
            <person name="Cattolico L."/>
            <person name="Jubin C."/>
            <person name="Lajus A."/>
            <person name="Segurens B."/>
            <person name="Vacherie B."/>
            <person name="Wincker P."/>
            <person name="Weissenbach J."/>
            <person name="Lemaitre B."/>
            <person name="Medigue C."/>
            <person name="Boccard F."/>
        </authorList>
    </citation>
    <scope>NUCLEOTIDE SEQUENCE [LARGE SCALE GENOMIC DNA]</scope>
    <source>
        <strain>L48</strain>
    </source>
</reference>
<gene>
    <name evidence="1" type="primary">dapF</name>
    <name type="ordered locus">PSEEN5366</name>
</gene>
<accession>Q1I303</accession>
<proteinExistence type="inferred from homology"/>
<sequence length="276" mass="30303">MLLRFTKMHGLGNDFMVLDLVSQHAHIQPKHAKQWGDRNTGIGFDQLLIVEAPSNPDVDFRYRIFNADGSEVEQCGNGARCFARFVLDKRLTAKKRIRVETKGGIIELDVRNDGQVCVDMGPPRFVPADIPFIADEQALSYPLEVDGQVHQIAAVSMGNPHSVLRVDDVRTAPVHELGPKIEHHPRFPQRVNAGFIQVVDRHRANLRVWERGAGETQACGTGACAAAVAAIAQGWMDSPVTIDLPGGRLSIEWAGPGKPVLMTGPAVRVFEGQVRL</sequence>
<protein>
    <recommendedName>
        <fullName evidence="1">Diaminopimelate epimerase</fullName>
        <shortName evidence="1">DAP epimerase</shortName>
        <ecNumber evidence="1">5.1.1.7</ecNumber>
    </recommendedName>
    <alternativeName>
        <fullName evidence="1">PLP-independent amino acid racemase</fullName>
    </alternativeName>
</protein>
<name>DAPF_PSEE4</name>